<keyword id="KW-0687">Ribonucleoprotein</keyword>
<keyword id="KW-0689">Ribosomal protein</keyword>
<keyword id="KW-0694">RNA-binding</keyword>
<keyword id="KW-0699">rRNA-binding</keyword>
<organism>
    <name type="scientific">Mycolicibacterium gilvum (strain PYR-GCK)</name>
    <name type="common">Mycobacterium gilvum (strain PYR-GCK)</name>
    <dbReference type="NCBI Taxonomy" id="350054"/>
    <lineage>
        <taxon>Bacteria</taxon>
        <taxon>Bacillati</taxon>
        <taxon>Actinomycetota</taxon>
        <taxon>Actinomycetes</taxon>
        <taxon>Mycobacteriales</taxon>
        <taxon>Mycobacteriaceae</taxon>
        <taxon>Mycolicibacterium</taxon>
    </lineage>
</organism>
<evidence type="ECO:0000255" key="1">
    <source>
        <dbReference type="HAMAP-Rule" id="MF_01367"/>
    </source>
</evidence>
<evidence type="ECO:0000305" key="2"/>
<accession>A4TEC7</accession>
<sequence>MIQQESRLKVADNTGAKEILCIRVLGGSGRRYAGIGDVIVATVKDAIPGGNVKRGDVVKAVIVRTVKERRRADGSYIRFDENAAVIIKNDNDPRGTRIFGPVGRELREKKFMKIVSLAPEVL</sequence>
<proteinExistence type="inferred from homology"/>
<dbReference type="EMBL" id="CP000656">
    <property type="protein sequence ID" value="ABP47503.1"/>
    <property type="molecule type" value="Genomic_DNA"/>
</dbReference>
<dbReference type="SMR" id="A4TEC7"/>
<dbReference type="STRING" id="350054.Mflv_5037"/>
<dbReference type="KEGG" id="mgi:Mflv_5037"/>
<dbReference type="eggNOG" id="COG0093">
    <property type="taxonomic scope" value="Bacteria"/>
</dbReference>
<dbReference type="HOGENOM" id="CLU_095071_2_1_11"/>
<dbReference type="OrthoDB" id="9806379at2"/>
<dbReference type="GO" id="GO:0022625">
    <property type="term" value="C:cytosolic large ribosomal subunit"/>
    <property type="evidence" value="ECO:0007669"/>
    <property type="project" value="TreeGrafter"/>
</dbReference>
<dbReference type="GO" id="GO:0070180">
    <property type="term" value="F:large ribosomal subunit rRNA binding"/>
    <property type="evidence" value="ECO:0007669"/>
    <property type="project" value="TreeGrafter"/>
</dbReference>
<dbReference type="GO" id="GO:0003735">
    <property type="term" value="F:structural constituent of ribosome"/>
    <property type="evidence" value="ECO:0007669"/>
    <property type="project" value="InterPro"/>
</dbReference>
<dbReference type="GO" id="GO:0006412">
    <property type="term" value="P:translation"/>
    <property type="evidence" value="ECO:0007669"/>
    <property type="project" value="UniProtKB-UniRule"/>
</dbReference>
<dbReference type="CDD" id="cd00337">
    <property type="entry name" value="Ribosomal_uL14"/>
    <property type="match status" value="1"/>
</dbReference>
<dbReference type="FunFam" id="2.40.150.20:FF:000001">
    <property type="entry name" value="50S ribosomal protein L14"/>
    <property type="match status" value="1"/>
</dbReference>
<dbReference type="Gene3D" id="2.40.150.20">
    <property type="entry name" value="Ribosomal protein L14"/>
    <property type="match status" value="1"/>
</dbReference>
<dbReference type="HAMAP" id="MF_01367">
    <property type="entry name" value="Ribosomal_uL14"/>
    <property type="match status" value="1"/>
</dbReference>
<dbReference type="InterPro" id="IPR000218">
    <property type="entry name" value="Ribosomal_uL14"/>
</dbReference>
<dbReference type="InterPro" id="IPR005745">
    <property type="entry name" value="Ribosomal_uL14_bac-type"/>
</dbReference>
<dbReference type="InterPro" id="IPR019972">
    <property type="entry name" value="Ribosomal_uL14_CS"/>
</dbReference>
<dbReference type="InterPro" id="IPR036853">
    <property type="entry name" value="Ribosomal_uL14_sf"/>
</dbReference>
<dbReference type="NCBIfam" id="TIGR01067">
    <property type="entry name" value="rplN_bact"/>
    <property type="match status" value="1"/>
</dbReference>
<dbReference type="PANTHER" id="PTHR11761">
    <property type="entry name" value="50S/60S RIBOSOMAL PROTEIN L14/L23"/>
    <property type="match status" value="1"/>
</dbReference>
<dbReference type="PANTHER" id="PTHR11761:SF3">
    <property type="entry name" value="LARGE RIBOSOMAL SUBUNIT PROTEIN UL14M"/>
    <property type="match status" value="1"/>
</dbReference>
<dbReference type="Pfam" id="PF00238">
    <property type="entry name" value="Ribosomal_L14"/>
    <property type="match status" value="1"/>
</dbReference>
<dbReference type="SMART" id="SM01374">
    <property type="entry name" value="Ribosomal_L14"/>
    <property type="match status" value="1"/>
</dbReference>
<dbReference type="SUPFAM" id="SSF50193">
    <property type="entry name" value="Ribosomal protein L14"/>
    <property type="match status" value="1"/>
</dbReference>
<dbReference type="PROSITE" id="PS00049">
    <property type="entry name" value="RIBOSOMAL_L14"/>
    <property type="match status" value="1"/>
</dbReference>
<feature type="chain" id="PRO_1000087136" description="Large ribosomal subunit protein uL14">
    <location>
        <begin position="1"/>
        <end position="122"/>
    </location>
</feature>
<comment type="function">
    <text evidence="1">Binds to 23S rRNA. Forms part of two intersubunit bridges in the 70S ribosome.</text>
</comment>
<comment type="subunit">
    <text evidence="1">Part of the 50S ribosomal subunit. Forms a cluster with proteins L3 and L19. In the 70S ribosome, L14 and L19 interact and together make contacts with the 16S rRNA in bridges B5 and B8.</text>
</comment>
<comment type="similarity">
    <text evidence="1">Belongs to the universal ribosomal protein uL14 family.</text>
</comment>
<name>RL14_MYCGI</name>
<protein>
    <recommendedName>
        <fullName evidence="1">Large ribosomal subunit protein uL14</fullName>
    </recommendedName>
    <alternativeName>
        <fullName evidence="2">50S ribosomal protein L14</fullName>
    </alternativeName>
</protein>
<reference key="1">
    <citation type="submission" date="2007-04" db="EMBL/GenBank/DDBJ databases">
        <title>Complete sequence of chromosome of Mycobacterium gilvum PYR-GCK.</title>
        <authorList>
            <consortium name="US DOE Joint Genome Institute"/>
            <person name="Copeland A."/>
            <person name="Lucas S."/>
            <person name="Lapidus A."/>
            <person name="Barry K."/>
            <person name="Detter J.C."/>
            <person name="Glavina del Rio T."/>
            <person name="Hammon N."/>
            <person name="Israni S."/>
            <person name="Dalin E."/>
            <person name="Tice H."/>
            <person name="Pitluck S."/>
            <person name="Chain P."/>
            <person name="Malfatti S."/>
            <person name="Shin M."/>
            <person name="Vergez L."/>
            <person name="Schmutz J."/>
            <person name="Larimer F."/>
            <person name="Land M."/>
            <person name="Hauser L."/>
            <person name="Kyrpides N."/>
            <person name="Mikhailova N."/>
            <person name="Miller C."/>
            <person name="Richardson P."/>
        </authorList>
    </citation>
    <scope>NUCLEOTIDE SEQUENCE [LARGE SCALE GENOMIC DNA]</scope>
    <source>
        <strain>PYR-GCK</strain>
    </source>
</reference>
<gene>
    <name evidence="1" type="primary">rplN</name>
    <name type="ordered locus">Mflv_5037</name>
</gene>